<protein>
    <recommendedName>
        <fullName evidence="1">Glycine--tRNA ligase alpha subunit</fullName>
        <ecNumber evidence="1">6.1.1.14</ecNumber>
    </recommendedName>
    <alternativeName>
        <fullName evidence="1">Glycyl-tRNA synthetase alpha subunit</fullName>
        <shortName evidence="1">GlyRS</shortName>
    </alternativeName>
</protein>
<sequence>MTFQNLILSLQNYWANQGCVIQQPYDTEKGAGTFNPATFLRVLGPEPWNVAYVEPSRRPTDGRYGENPNRLQHYYQFQVIMKPSPANILDLYLDSLRAFGINPSQHDIRFVEDDWESPTLGAWGLGWEVWLDGMEITQFTYFQQAGGIDLKPVSSEITYGCERIAMYLQGVDNVYDLEWVKGVKYGDIHHQTEVEFSTYNFEEADVALLLELFGKYEKECIRLAEKDLVFPAYDFVMKCSHTFNLLDARGAISVTERASYIGRVRNVARLCAEGYVRQRERLGYPMLKGGN</sequence>
<reference key="1">
    <citation type="submission" date="2008-05" db="EMBL/GenBank/DDBJ databases">
        <title>Complete sequence of chromosome of Geobacter lovleyi SZ.</title>
        <authorList>
            <consortium name="US DOE Joint Genome Institute"/>
            <person name="Lucas S."/>
            <person name="Copeland A."/>
            <person name="Lapidus A."/>
            <person name="Glavina del Rio T."/>
            <person name="Dalin E."/>
            <person name="Tice H."/>
            <person name="Bruce D."/>
            <person name="Goodwin L."/>
            <person name="Pitluck S."/>
            <person name="Chertkov O."/>
            <person name="Meincke L."/>
            <person name="Brettin T."/>
            <person name="Detter J.C."/>
            <person name="Han C."/>
            <person name="Tapia R."/>
            <person name="Kuske C.R."/>
            <person name="Schmutz J."/>
            <person name="Larimer F."/>
            <person name="Land M."/>
            <person name="Hauser L."/>
            <person name="Kyrpides N."/>
            <person name="Mikhailova N."/>
            <person name="Sung Y."/>
            <person name="Fletcher K.E."/>
            <person name="Ritalahti K.M."/>
            <person name="Loeffler F.E."/>
            <person name="Richardson P."/>
        </authorList>
    </citation>
    <scope>NUCLEOTIDE SEQUENCE [LARGE SCALE GENOMIC DNA]</scope>
    <source>
        <strain>ATCC BAA-1151 / DSM 17278 / SZ</strain>
    </source>
</reference>
<comment type="catalytic activity">
    <reaction evidence="1">
        <text>tRNA(Gly) + glycine + ATP = glycyl-tRNA(Gly) + AMP + diphosphate</text>
        <dbReference type="Rhea" id="RHEA:16013"/>
        <dbReference type="Rhea" id="RHEA-COMP:9664"/>
        <dbReference type="Rhea" id="RHEA-COMP:9683"/>
        <dbReference type="ChEBI" id="CHEBI:30616"/>
        <dbReference type="ChEBI" id="CHEBI:33019"/>
        <dbReference type="ChEBI" id="CHEBI:57305"/>
        <dbReference type="ChEBI" id="CHEBI:78442"/>
        <dbReference type="ChEBI" id="CHEBI:78522"/>
        <dbReference type="ChEBI" id="CHEBI:456215"/>
        <dbReference type="EC" id="6.1.1.14"/>
    </reaction>
</comment>
<comment type="subunit">
    <text evidence="1">Tetramer of two alpha and two beta subunits.</text>
</comment>
<comment type="subcellular location">
    <subcellularLocation>
        <location evidence="1">Cytoplasm</location>
    </subcellularLocation>
</comment>
<comment type="similarity">
    <text evidence="1">Belongs to the class-II aminoacyl-tRNA synthetase family.</text>
</comment>
<evidence type="ECO:0000255" key="1">
    <source>
        <dbReference type="HAMAP-Rule" id="MF_00254"/>
    </source>
</evidence>
<keyword id="KW-0030">Aminoacyl-tRNA synthetase</keyword>
<keyword id="KW-0067">ATP-binding</keyword>
<keyword id="KW-0963">Cytoplasm</keyword>
<keyword id="KW-0436">Ligase</keyword>
<keyword id="KW-0547">Nucleotide-binding</keyword>
<keyword id="KW-0648">Protein biosynthesis</keyword>
<keyword id="KW-1185">Reference proteome</keyword>
<organism>
    <name type="scientific">Trichlorobacter lovleyi (strain ATCC BAA-1151 / DSM 17278 / SZ)</name>
    <name type="common">Geobacter lovleyi</name>
    <dbReference type="NCBI Taxonomy" id="398767"/>
    <lineage>
        <taxon>Bacteria</taxon>
        <taxon>Pseudomonadati</taxon>
        <taxon>Thermodesulfobacteriota</taxon>
        <taxon>Desulfuromonadia</taxon>
        <taxon>Geobacterales</taxon>
        <taxon>Geobacteraceae</taxon>
        <taxon>Trichlorobacter</taxon>
    </lineage>
</organism>
<feature type="chain" id="PRO_1000101197" description="Glycine--tRNA ligase alpha subunit">
    <location>
        <begin position="1"/>
        <end position="291"/>
    </location>
</feature>
<gene>
    <name evidence="1" type="primary">glyQ</name>
    <name type="ordered locus">Glov_1023</name>
</gene>
<name>SYGA_TRIL1</name>
<dbReference type="EC" id="6.1.1.14" evidence="1"/>
<dbReference type="EMBL" id="CP001089">
    <property type="protein sequence ID" value="ACD94746.1"/>
    <property type="molecule type" value="Genomic_DNA"/>
</dbReference>
<dbReference type="RefSeq" id="WP_012469096.1">
    <property type="nucleotide sequence ID" value="NC_010814.1"/>
</dbReference>
<dbReference type="SMR" id="B3E622"/>
<dbReference type="STRING" id="398767.Glov_1023"/>
<dbReference type="KEGG" id="glo:Glov_1023"/>
<dbReference type="eggNOG" id="COG0752">
    <property type="taxonomic scope" value="Bacteria"/>
</dbReference>
<dbReference type="HOGENOM" id="CLU_057066_1_0_7"/>
<dbReference type="OrthoDB" id="9802183at2"/>
<dbReference type="Proteomes" id="UP000002420">
    <property type="component" value="Chromosome"/>
</dbReference>
<dbReference type="GO" id="GO:0005829">
    <property type="term" value="C:cytosol"/>
    <property type="evidence" value="ECO:0007669"/>
    <property type="project" value="TreeGrafter"/>
</dbReference>
<dbReference type="GO" id="GO:0005524">
    <property type="term" value="F:ATP binding"/>
    <property type="evidence" value="ECO:0007669"/>
    <property type="project" value="UniProtKB-UniRule"/>
</dbReference>
<dbReference type="GO" id="GO:0004820">
    <property type="term" value="F:glycine-tRNA ligase activity"/>
    <property type="evidence" value="ECO:0007669"/>
    <property type="project" value="UniProtKB-UniRule"/>
</dbReference>
<dbReference type="GO" id="GO:0006426">
    <property type="term" value="P:glycyl-tRNA aminoacylation"/>
    <property type="evidence" value="ECO:0007669"/>
    <property type="project" value="UniProtKB-UniRule"/>
</dbReference>
<dbReference type="CDD" id="cd00733">
    <property type="entry name" value="GlyRS_alpha_core"/>
    <property type="match status" value="1"/>
</dbReference>
<dbReference type="FunFam" id="3.30.930.10:FF:000006">
    <property type="entry name" value="Glycine--tRNA ligase alpha subunit"/>
    <property type="match status" value="1"/>
</dbReference>
<dbReference type="Gene3D" id="3.30.930.10">
    <property type="entry name" value="Bira Bifunctional Protein, Domain 2"/>
    <property type="match status" value="1"/>
</dbReference>
<dbReference type="Gene3D" id="1.20.58.180">
    <property type="entry name" value="Class II aaRS and biotin synthetases, domain 2"/>
    <property type="match status" value="1"/>
</dbReference>
<dbReference type="HAMAP" id="MF_00254">
    <property type="entry name" value="Gly_tRNA_synth_alpha"/>
    <property type="match status" value="1"/>
</dbReference>
<dbReference type="InterPro" id="IPR045864">
    <property type="entry name" value="aa-tRNA-synth_II/BPL/LPL"/>
</dbReference>
<dbReference type="InterPro" id="IPR006194">
    <property type="entry name" value="Gly-tRNA-synth_heterodimer"/>
</dbReference>
<dbReference type="InterPro" id="IPR002310">
    <property type="entry name" value="Gly-tRNA_ligase_asu"/>
</dbReference>
<dbReference type="NCBIfam" id="TIGR00388">
    <property type="entry name" value="glyQ"/>
    <property type="match status" value="1"/>
</dbReference>
<dbReference type="NCBIfam" id="NF006827">
    <property type="entry name" value="PRK09348.1"/>
    <property type="match status" value="1"/>
</dbReference>
<dbReference type="PANTHER" id="PTHR30075:SF2">
    <property type="entry name" value="GLYCINE--TRNA LIGASE, CHLOROPLASTIC_MITOCHONDRIAL 2"/>
    <property type="match status" value="1"/>
</dbReference>
<dbReference type="PANTHER" id="PTHR30075">
    <property type="entry name" value="GLYCYL-TRNA SYNTHETASE"/>
    <property type="match status" value="1"/>
</dbReference>
<dbReference type="Pfam" id="PF02091">
    <property type="entry name" value="tRNA-synt_2e"/>
    <property type="match status" value="1"/>
</dbReference>
<dbReference type="PRINTS" id="PR01044">
    <property type="entry name" value="TRNASYNTHGA"/>
</dbReference>
<dbReference type="SUPFAM" id="SSF55681">
    <property type="entry name" value="Class II aaRS and biotin synthetases"/>
    <property type="match status" value="1"/>
</dbReference>
<dbReference type="PROSITE" id="PS50861">
    <property type="entry name" value="AA_TRNA_LIGASE_II_GLYAB"/>
    <property type="match status" value="1"/>
</dbReference>
<proteinExistence type="inferred from homology"/>
<accession>B3E622</accession>